<reference key="1">
    <citation type="journal article" date="2002" name="Science">
        <title>The genome sequence of the malaria mosquito Anopheles gambiae.</title>
        <authorList>
            <person name="Holt R.A."/>
            <person name="Subramanian G.M."/>
            <person name="Halpern A."/>
            <person name="Sutton G.G."/>
            <person name="Charlab R."/>
            <person name="Nusskern D.R."/>
            <person name="Wincker P."/>
            <person name="Clark A.G."/>
            <person name="Ribeiro J.M.C."/>
            <person name="Wides R."/>
            <person name="Salzberg S.L."/>
            <person name="Loftus B.J."/>
            <person name="Yandell M.D."/>
            <person name="Majoros W.H."/>
            <person name="Rusch D.B."/>
            <person name="Lai Z."/>
            <person name="Kraft C.L."/>
            <person name="Abril J.F."/>
            <person name="Anthouard V."/>
            <person name="Arensburger P."/>
            <person name="Atkinson P.W."/>
            <person name="Baden H."/>
            <person name="de Berardinis V."/>
            <person name="Baldwin D."/>
            <person name="Benes V."/>
            <person name="Biedler J."/>
            <person name="Blass C."/>
            <person name="Bolanos R."/>
            <person name="Boscus D."/>
            <person name="Barnstead M."/>
            <person name="Cai S."/>
            <person name="Center A."/>
            <person name="Chaturverdi K."/>
            <person name="Christophides G.K."/>
            <person name="Chrystal M.A.M."/>
            <person name="Clamp M."/>
            <person name="Cravchik A."/>
            <person name="Curwen V."/>
            <person name="Dana A."/>
            <person name="Delcher A."/>
            <person name="Dew I."/>
            <person name="Evans C.A."/>
            <person name="Flanigan M."/>
            <person name="Grundschober-Freimoser A."/>
            <person name="Friedli L."/>
            <person name="Gu Z."/>
            <person name="Guan P."/>
            <person name="Guigo R."/>
            <person name="Hillenmeyer M.E."/>
            <person name="Hladun S.L."/>
            <person name="Hogan J.R."/>
            <person name="Hong Y.S."/>
            <person name="Hoover J."/>
            <person name="Jaillon O."/>
            <person name="Ke Z."/>
            <person name="Kodira C.D."/>
            <person name="Kokoza E."/>
            <person name="Koutsos A."/>
            <person name="Letunic I."/>
            <person name="Levitsky A.A."/>
            <person name="Liang Y."/>
            <person name="Lin J.-J."/>
            <person name="Lobo N.F."/>
            <person name="Lopez J.R."/>
            <person name="Malek J.A."/>
            <person name="McIntosh T.C."/>
            <person name="Meister S."/>
            <person name="Miller J.R."/>
            <person name="Mobarry C."/>
            <person name="Mongin E."/>
            <person name="Murphy S.D."/>
            <person name="O'Brochta D.A."/>
            <person name="Pfannkoch C."/>
            <person name="Qi R."/>
            <person name="Regier M.A."/>
            <person name="Remington K."/>
            <person name="Shao H."/>
            <person name="Sharakhova M.V."/>
            <person name="Sitter C.D."/>
            <person name="Shetty J."/>
            <person name="Smith T.J."/>
            <person name="Strong R."/>
            <person name="Sun J."/>
            <person name="Thomasova D."/>
            <person name="Ton L.Q."/>
            <person name="Topalis P."/>
            <person name="Tu Z.J."/>
            <person name="Unger M.F."/>
            <person name="Walenz B."/>
            <person name="Wang A.H."/>
            <person name="Wang J."/>
            <person name="Wang M."/>
            <person name="Wang X."/>
            <person name="Woodford K.J."/>
            <person name="Wortman J.R."/>
            <person name="Wu M."/>
            <person name="Yao A."/>
            <person name="Zdobnov E.M."/>
            <person name="Zhang H."/>
            <person name="Zhao Q."/>
            <person name="Zhao S."/>
            <person name="Zhu S.C."/>
            <person name="Zhimulev I."/>
            <person name="Coluzzi M."/>
            <person name="della Torre A."/>
            <person name="Roth C.W."/>
            <person name="Louis C."/>
            <person name="Kalush F."/>
            <person name="Mural R.J."/>
            <person name="Myers E.W."/>
            <person name="Adams M.D."/>
            <person name="Smith H.O."/>
            <person name="Broder S."/>
            <person name="Gardner M.J."/>
            <person name="Fraser C.M."/>
            <person name="Birney E."/>
            <person name="Bork P."/>
            <person name="Brey P.T."/>
            <person name="Venter J.C."/>
            <person name="Weissenbach J."/>
            <person name="Kafatos F.C."/>
            <person name="Collins F.H."/>
            <person name="Hoffman S.L."/>
        </authorList>
    </citation>
    <scope>NUCLEOTIDE SEQUENCE [LARGE SCALE GENOMIC DNA]</scope>
    <scope>ALTERNATIVE SPLICING</scope>
    <source>
        <strain>PEST</strain>
    </source>
</reference>
<feature type="chain" id="PRO_0000073446" description="Alpha-actinin, sarcomeric">
    <location>
        <begin position="1"/>
        <end position="922"/>
    </location>
</feature>
<feature type="domain" description="Calponin-homology (CH) 1" evidence="2">
    <location>
        <begin position="36"/>
        <end position="140"/>
    </location>
</feature>
<feature type="domain" description="Calponin-homology (CH) 2" evidence="2">
    <location>
        <begin position="149"/>
        <end position="255"/>
    </location>
</feature>
<feature type="repeat" description="Spectrin 1">
    <location>
        <begin position="253"/>
        <end position="393"/>
    </location>
</feature>
<feature type="repeat" description="Spectrin 2">
    <location>
        <begin position="394"/>
        <end position="508"/>
    </location>
</feature>
<feature type="repeat" description="Spectrin 3">
    <location>
        <begin position="509"/>
        <end position="629"/>
    </location>
</feature>
<feature type="repeat" description="Spectrin 4">
    <location>
        <begin position="630"/>
        <end position="742"/>
    </location>
</feature>
<feature type="domain" description="EF-hand 1" evidence="3">
    <location>
        <begin position="776"/>
        <end position="811"/>
    </location>
</feature>
<feature type="domain" description="EF-hand 2" evidence="3">
    <location>
        <begin position="817"/>
        <end position="852"/>
    </location>
</feature>
<feature type="region of interest" description="Actin-binding">
    <location>
        <begin position="1"/>
        <end position="252"/>
    </location>
</feature>
<feature type="binding site" evidence="3">
    <location>
        <position position="789"/>
    </location>
    <ligand>
        <name>Ca(2+)</name>
        <dbReference type="ChEBI" id="CHEBI:29108"/>
    </ligand>
</feature>
<feature type="binding site" evidence="3">
    <location>
        <position position="791"/>
    </location>
    <ligand>
        <name>Ca(2+)</name>
        <dbReference type="ChEBI" id="CHEBI:29108"/>
    </ligand>
</feature>
<feature type="binding site" evidence="3">
    <location>
        <position position="793"/>
    </location>
    <ligand>
        <name>Ca(2+)</name>
        <dbReference type="ChEBI" id="CHEBI:29108"/>
    </ligand>
</feature>
<feature type="binding site" evidence="3">
    <location>
        <position position="795"/>
    </location>
    <ligand>
        <name>Ca(2+)</name>
        <dbReference type="ChEBI" id="CHEBI:29108"/>
    </ligand>
</feature>
<feature type="binding site" evidence="3">
    <location>
        <position position="800"/>
    </location>
    <ligand>
        <name>Ca(2+)</name>
        <dbReference type="ChEBI" id="CHEBI:29108"/>
    </ligand>
</feature>
<evidence type="ECO:0000250" key="1"/>
<evidence type="ECO:0000255" key="2">
    <source>
        <dbReference type="PROSITE-ProRule" id="PRU00044"/>
    </source>
</evidence>
<evidence type="ECO:0000255" key="3">
    <source>
        <dbReference type="PROSITE-ProRule" id="PRU00448"/>
    </source>
</evidence>
<evidence type="ECO:0000305" key="4"/>
<comment type="function">
    <text evidence="1">F-actin cross-linking protein which is thought to anchor actin to a variety of intracellular structures. This is a bundling protein (By similarity).</text>
</comment>
<comment type="subunit">
    <text evidence="1">Homodimer; antiparallel.</text>
</comment>
<comment type="similarity">
    <text evidence="4">Belongs to the alpha-actinin family.</text>
</comment>
<gene>
    <name type="primary">Actn</name>
    <name type="ORF">AGAP001497</name>
</gene>
<keyword id="KW-0009">Actin-binding</keyword>
<keyword id="KW-0106">Calcium</keyword>
<keyword id="KW-0479">Metal-binding</keyword>
<keyword id="KW-1185">Reference proteome</keyword>
<keyword id="KW-0677">Repeat</keyword>
<name>ACTN_ANOGA</name>
<protein>
    <recommendedName>
        <fullName>Alpha-actinin, sarcomeric</fullName>
    </recommendedName>
    <alternativeName>
        <fullName>F-actin cross-linking protein</fullName>
    </alternativeName>
</protein>
<proteinExistence type="inferred from homology"/>
<organism>
    <name type="scientific">Anopheles gambiae</name>
    <name type="common">African malaria mosquito</name>
    <dbReference type="NCBI Taxonomy" id="7165"/>
    <lineage>
        <taxon>Eukaryota</taxon>
        <taxon>Metazoa</taxon>
        <taxon>Ecdysozoa</taxon>
        <taxon>Arthropoda</taxon>
        <taxon>Hexapoda</taxon>
        <taxon>Insecta</taxon>
        <taxon>Pterygota</taxon>
        <taxon>Neoptera</taxon>
        <taxon>Endopterygota</taxon>
        <taxon>Diptera</taxon>
        <taxon>Nematocera</taxon>
        <taxon>Culicoidea</taxon>
        <taxon>Culicidae</taxon>
        <taxon>Anophelinae</taxon>
        <taxon>Anopheles</taxon>
    </lineage>
</organism>
<accession>Q7PKQ5</accession>
<accession>Q380H9</accession>
<accession>Q7PUX2</accession>
<sequence length="922" mass="106527">MMENGGYVGQYGGEENYMEQEEEWEREGLLDPAWEKQQKKTFTAWCNSHLRKAGTSIENIEDDFRNGLKLMLLLEVISGETLPKPDRGKMRFHKIANVNKALDFIASKGVKLVSIGAEEIVDGNLKMTLGMIWTIILRFAIQDISVEEMTAKEGLLLWCQRKTAPYKNVNVQNFHLSFKDGLAFCALIHRHRPDLIDYSKLSKDNPLENLNTAFDVAEKYLDIPRMLDPDDLINTPKPDERAIMTYVSCYYHAFQGAQQPGSTPFVIHLTKTGLSYRFFVRLFAAETAANRICKVLKVNQENERLMEEYERLASDLLEWIRRTMPWLNSRQSDSTLAGVQKKLEEYRTYRRKHKPPRVEQKAKLETNFNTLQTKLRLSNRPAYMPTEGKMVSDITNSWKGLEHAEKAFEEWLLAETMRLERLEHLAQKFKHKADTHEDWTKGKEEMLQSQDFRNCKLNELKALKKKHEAFESDLAAHQDRVEQIAAIAQELNTLEYHDCASVNARCQRICDQWDRLGALTQRRRQGLDEAERILEKIDLLHLEFAKRAAPFNNWLDGAREDLVDMFIVHTMEEIQGLIQAHDQFKATLGEADKEFNVIIGLVRDAEAIVKQEQVPGGLVNPYTTLSADLISRKWSEVRALVPQRDQTLANELRKQQNNEMLRRQFAEKANAVGPWIERQMDAVTAIGMGISGSLEEQLHRLKEYEQAVYAYKPSIEELEKIHQAVQESMIFENRYTHYTMETLRVGWEQLLTSINRNINEVENQILTRDSKGITQEQLTEFRSSFNHFDKNRTGRLAPEEFKSCLVSLGYSIGKDKQGDMDFQRILAVVDPNASGYVQFDAFLDFMTRESTDTDTAEQVIDSFRILASDRPYILPDELRRELPPDQAEYCIQRMPPYKGPNAIPGALDYMSFSTALYGESDL</sequence>
<dbReference type="EMBL" id="AAAB01008987">
    <property type="protein sequence ID" value="EAA43174.2"/>
    <property type="molecule type" value="Genomic_DNA"/>
</dbReference>
<dbReference type="RefSeq" id="XP_321625.2">
    <property type="nucleotide sequence ID" value="XM_321625.5"/>
</dbReference>
<dbReference type="SMR" id="Q7PKQ5"/>
<dbReference type="FunCoup" id="Q7PKQ5">
    <property type="interactions" value="355"/>
</dbReference>
<dbReference type="STRING" id="7165.Q7PKQ5"/>
<dbReference type="PaxDb" id="7165-AGAP001497-PA"/>
<dbReference type="EnsemblMetazoa" id="AGAP001497-RA">
    <property type="protein sequence ID" value="AGAP001497-PA"/>
    <property type="gene ID" value="AGAP001497"/>
</dbReference>
<dbReference type="VEuPathDB" id="VectorBase:AGAMI1_001655"/>
<dbReference type="VEuPathDB" id="VectorBase:AGAP001497"/>
<dbReference type="eggNOG" id="KOG0035">
    <property type="taxonomic scope" value="Eukaryota"/>
</dbReference>
<dbReference type="InParanoid" id="Q7PKQ5"/>
<dbReference type="OrthoDB" id="18853at2759"/>
<dbReference type="PhylomeDB" id="Q7PKQ5"/>
<dbReference type="Proteomes" id="UP000007062">
    <property type="component" value="Chromosome 2R"/>
</dbReference>
<dbReference type="GO" id="GO:0030054">
    <property type="term" value="C:cell junction"/>
    <property type="evidence" value="ECO:0000318"/>
    <property type="project" value="GO_Central"/>
</dbReference>
<dbReference type="GO" id="GO:0042995">
    <property type="term" value="C:cell projection"/>
    <property type="evidence" value="ECO:0000318"/>
    <property type="project" value="GO_Central"/>
</dbReference>
<dbReference type="GO" id="GO:0030864">
    <property type="term" value="C:cortical actin cytoskeleton"/>
    <property type="evidence" value="ECO:0000318"/>
    <property type="project" value="GO_Central"/>
</dbReference>
<dbReference type="GO" id="GO:0005886">
    <property type="term" value="C:plasma membrane"/>
    <property type="evidence" value="ECO:0000318"/>
    <property type="project" value="GO_Central"/>
</dbReference>
<dbReference type="GO" id="GO:0030018">
    <property type="term" value="C:Z disc"/>
    <property type="evidence" value="ECO:0000318"/>
    <property type="project" value="GO_Central"/>
</dbReference>
<dbReference type="GO" id="GO:0051015">
    <property type="term" value="F:actin filament binding"/>
    <property type="evidence" value="ECO:0000318"/>
    <property type="project" value="GO_Central"/>
</dbReference>
<dbReference type="GO" id="GO:0005509">
    <property type="term" value="F:calcium ion binding"/>
    <property type="evidence" value="ECO:0007669"/>
    <property type="project" value="InterPro"/>
</dbReference>
<dbReference type="GO" id="GO:0030036">
    <property type="term" value="P:actin cytoskeleton organization"/>
    <property type="evidence" value="ECO:0000318"/>
    <property type="project" value="GO_Central"/>
</dbReference>
<dbReference type="GO" id="GO:0055001">
    <property type="term" value="P:muscle cell development"/>
    <property type="evidence" value="ECO:0000318"/>
    <property type="project" value="GO_Central"/>
</dbReference>
<dbReference type="CDD" id="cd21214">
    <property type="entry name" value="CH_ACTN_rpt1"/>
    <property type="match status" value="1"/>
</dbReference>
<dbReference type="CDD" id="cd21216">
    <property type="entry name" value="CH_ACTN_rpt2"/>
    <property type="match status" value="1"/>
</dbReference>
<dbReference type="CDD" id="cd00051">
    <property type="entry name" value="EFh"/>
    <property type="match status" value="1"/>
</dbReference>
<dbReference type="CDD" id="cd00176">
    <property type="entry name" value="SPEC"/>
    <property type="match status" value="3"/>
</dbReference>
<dbReference type="FunFam" id="1.10.238.10:FF:000004">
    <property type="entry name" value="Actinin alpha 1"/>
    <property type="match status" value="1"/>
</dbReference>
<dbReference type="FunFam" id="1.10.418.10:FF:000001">
    <property type="entry name" value="Actinin alpha 1"/>
    <property type="match status" value="1"/>
</dbReference>
<dbReference type="FunFam" id="1.20.58.60:FF:000004">
    <property type="entry name" value="Actinin alpha 1"/>
    <property type="match status" value="1"/>
</dbReference>
<dbReference type="FunFam" id="1.20.58.60:FF:000005">
    <property type="entry name" value="Actinin alpha 1"/>
    <property type="match status" value="1"/>
</dbReference>
<dbReference type="FunFam" id="1.10.418.10:FF:000005">
    <property type="entry name" value="Actinin alpha 4"/>
    <property type="match status" value="1"/>
</dbReference>
<dbReference type="FunFam" id="1.20.58.60:FF:000002">
    <property type="entry name" value="Actinin, alpha 1"/>
    <property type="match status" value="1"/>
</dbReference>
<dbReference type="FunFam" id="1.20.58.60:FF:000003">
    <property type="entry name" value="Actinin, alpha 1"/>
    <property type="match status" value="1"/>
</dbReference>
<dbReference type="FunFam" id="1.10.238.10:FF:000148">
    <property type="entry name" value="alpha-actinin, sarcomeric isoform X2"/>
    <property type="match status" value="1"/>
</dbReference>
<dbReference type="Gene3D" id="1.20.58.60">
    <property type="match status" value="4"/>
</dbReference>
<dbReference type="Gene3D" id="1.10.418.10">
    <property type="entry name" value="Calponin-like domain"/>
    <property type="match status" value="2"/>
</dbReference>
<dbReference type="Gene3D" id="1.10.238.10">
    <property type="entry name" value="EF-hand"/>
    <property type="match status" value="2"/>
</dbReference>
<dbReference type="InterPro" id="IPR001589">
    <property type="entry name" value="Actinin_actin-bd_CS"/>
</dbReference>
<dbReference type="InterPro" id="IPR001715">
    <property type="entry name" value="CH_dom"/>
</dbReference>
<dbReference type="InterPro" id="IPR036872">
    <property type="entry name" value="CH_dom_sf"/>
</dbReference>
<dbReference type="InterPro" id="IPR011992">
    <property type="entry name" value="EF-hand-dom_pair"/>
</dbReference>
<dbReference type="InterPro" id="IPR014837">
    <property type="entry name" value="EF-hand_Ca_insen"/>
</dbReference>
<dbReference type="InterPro" id="IPR018247">
    <property type="entry name" value="EF_Hand_1_Ca_BS"/>
</dbReference>
<dbReference type="InterPro" id="IPR002048">
    <property type="entry name" value="EF_hand_dom"/>
</dbReference>
<dbReference type="InterPro" id="IPR018159">
    <property type="entry name" value="Spectrin/alpha-actinin"/>
</dbReference>
<dbReference type="InterPro" id="IPR002017">
    <property type="entry name" value="Spectrin_repeat"/>
</dbReference>
<dbReference type="PANTHER" id="PTHR11915">
    <property type="entry name" value="SPECTRIN/FILAMIN RELATED CYTOSKELETAL PROTEIN"/>
    <property type="match status" value="1"/>
</dbReference>
<dbReference type="Pfam" id="PF00307">
    <property type="entry name" value="CH"/>
    <property type="match status" value="2"/>
</dbReference>
<dbReference type="Pfam" id="PF08726">
    <property type="entry name" value="EFhand_Ca_insen"/>
    <property type="match status" value="1"/>
</dbReference>
<dbReference type="Pfam" id="PF00435">
    <property type="entry name" value="Spectrin"/>
    <property type="match status" value="4"/>
</dbReference>
<dbReference type="SMART" id="SM00033">
    <property type="entry name" value="CH"/>
    <property type="match status" value="2"/>
</dbReference>
<dbReference type="SMART" id="SM00054">
    <property type="entry name" value="EFh"/>
    <property type="match status" value="2"/>
</dbReference>
<dbReference type="SMART" id="SM01184">
    <property type="entry name" value="efhand_Ca_insen"/>
    <property type="match status" value="1"/>
</dbReference>
<dbReference type="SMART" id="SM00150">
    <property type="entry name" value="SPEC"/>
    <property type="match status" value="4"/>
</dbReference>
<dbReference type="SUPFAM" id="SSF47576">
    <property type="entry name" value="Calponin-homology domain, CH-domain"/>
    <property type="match status" value="1"/>
</dbReference>
<dbReference type="SUPFAM" id="SSF47473">
    <property type="entry name" value="EF-hand"/>
    <property type="match status" value="1"/>
</dbReference>
<dbReference type="SUPFAM" id="SSF46966">
    <property type="entry name" value="Spectrin repeat"/>
    <property type="match status" value="4"/>
</dbReference>
<dbReference type="PROSITE" id="PS00019">
    <property type="entry name" value="ACTININ_1"/>
    <property type="match status" value="1"/>
</dbReference>
<dbReference type="PROSITE" id="PS00020">
    <property type="entry name" value="ACTININ_2"/>
    <property type="match status" value="1"/>
</dbReference>
<dbReference type="PROSITE" id="PS50021">
    <property type="entry name" value="CH"/>
    <property type="match status" value="2"/>
</dbReference>
<dbReference type="PROSITE" id="PS00018">
    <property type="entry name" value="EF_HAND_1"/>
    <property type="match status" value="1"/>
</dbReference>
<dbReference type="PROSITE" id="PS50222">
    <property type="entry name" value="EF_HAND_2"/>
    <property type="match status" value="2"/>
</dbReference>